<organism>
    <name type="scientific">Oryza sativa subsp. japonica</name>
    <name type="common">Rice</name>
    <dbReference type="NCBI Taxonomy" id="39947"/>
    <lineage>
        <taxon>Eukaryota</taxon>
        <taxon>Viridiplantae</taxon>
        <taxon>Streptophyta</taxon>
        <taxon>Embryophyta</taxon>
        <taxon>Tracheophyta</taxon>
        <taxon>Spermatophyta</taxon>
        <taxon>Magnoliopsida</taxon>
        <taxon>Liliopsida</taxon>
        <taxon>Poales</taxon>
        <taxon>Poaceae</taxon>
        <taxon>BOP clade</taxon>
        <taxon>Oryzoideae</taxon>
        <taxon>Oryzeae</taxon>
        <taxon>Oryzinae</taxon>
        <taxon>Oryza</taxon>
        <taxon>Oryza sativa</taxon>
    </lineage>
</organism>
<name>BGAL8_ORYSJ</name>
<comment type="catalytic activity">
    <reaction>
        <text>Hydrolysis of terminal non-reducing beta-D-galactose residues in beta-D-galactosides.</text>
        <dbReference type="EC" id="3.2.1.23"/>
    </reaction>
</comment>
<comment type="subcellular location">
    <subcellularLocation>
        <location evidence="2">Secreted</location>
        <location evidence="2">Extracellular space</location>
        <location evidence="2">Apoplast</location>
    </subcellularLocation>
</comment>
<comment type="similarity">
    <text evidence="2">Belongs to the glycosyl hydrolase 35 family.</text>
</comment>
<comment type="sequence caution" evidence="2">
    <conflict type="erroneous gene model prediction">
        <sequence resource="EMBL-CDS" id="AAV59405"/>
    </conflict>
</comment>
<accession>Q0DGD7</accession>
<accession>B7EF25</accession>
<accession>Q53WK7</accession>
<keyword id="KW-0052">Apoplast</keyword>
<keyword id="KW-0325">Glycoprotein</keyword>
<keyword id="KW-0326">Glycosidase</keyword>
<keyword id="KW-0378">Hydrolase</keyword>
<keyword id="KW-1185">Reference proteome</keyword>
<keyword id="KW-0964">Secreted</keyword>
<keyword id="KW-0732">Signal</keyword>
<proteinExistence type="evidence at transcript level"/>
<reference key="1">
    <citation type="journal article" date="2005" name="Mol. Genet. Genomics">
        <title>A fine physical map of the rice chromosome 5.</title>
        <authorList>
            <person name="Cheng C.-H."/>
            <person name="Chung M.C."/>
            <person name="Liu S.-M."/>
            <person name="Chen S.-K."/>
            <person name="Kao F.Y."/>
            <person name="Lin S.-J."/>
            <person name="Hsiao S.-H."/>
            <person name="Tseng I.C."/>
            <person name="Hsing Y.-I.C."/>
            <person name="Wu H.-P."/>
            <person name="Chen C.-S."/>
            <person name="Shaw J.-F."/>
            <person name="Wu J."/>
            <person name="Matsumoto T."/>
            <person name="Sasaki T."/>
            <person name="Chen H.-C."/>
            <person name="Chow T.-Y."/>
        </authorList>
    </citation>
    <scope>NUCLEOTIDE SEQUENCE [LARGE SCALE GENOMIC DNA]</scope>
    <source>
        <strain>cv. Nipponbare</strain>
    </source>
</reference>
<reference key="2">
    <citation type="journal article" date="2005" name="Nature">
        <title>The map-based sequence of the rice genome.</title>
        <authorList>
            <consortium name="International rice genome sequencing project (IRGSP)"/>
        </authorList>
    </citation>
    <scope>NUCLEOTIDE SEQUENCE [LARGE SCALE GENOMIC DNA]</scope>
    <source>
        <strain>cv. Nipponbare</strain>
    </source>
</reference>
<reference key="3">
    <citation type="journal article" date="2008" name="Nucleic Acids Res.">
        <title>The rice annotation project database (RAP-DB): 2008 update.</title>
        <authorList>
            <consortium name="The rice annotation project (RAP)"/>
        </authorList>
    </citation>
    <scope>GENOME REANNOTATION</scope>
    <source>
        <strain>cv. Nipponbare</strain>
    </source>
</reference>
<reference key="4">
    <citation type="journal article" date="2013" name="Rice">
        <title>Improvement of the Oryza sativa Nipponbare reference genome using next generation sequence and optical map data.</title>
        <authorList>
            <person name="Kawahara Y."/>
            <person name="de la Bastide M."/>
            <person name="Hamilton J.P."/>
            <person name="Kanamori H."/>
            <person name="McCombie W.R."/>
            <person name="Ouyang S."/>
            <person name="Schwartz D.C."/>
            <person name="Tanaka T."/>
            <person name="Wu J."/>
            <person name="Zhou S."/>
            <person name="Childs K.L."/>
            <person name="Davidson R.M."/>
            <person name="Lin H."/>
            <person name="Quesada-Ocampo L."/>
            <person name="Vaillancourt B."/>
            <person name="Sakai H."/>
            <person name="Lee S.S."/>
            <person name="Kim J."/>
            <person name="Numa H."/>
            <person name="Itoh T."/>
            <person name="Buell C.R."/>
            <person name="Matsumoto T."/>
        </authorList>
    </citation>
    <scope>GENOME REANNOTATION</scope>
    <source>
        <strain>cv. Nipponbare</strain>
    </source>
</reference>
<reference key="5">
    <citation type="journal article" date="2005" name="PLoS Biol.">
        <title>The genomes of Oryza sativa: a history of duplications.</title>
        <authorList>
            <person name="Yu J."/>
            <person name="Wang J."/>
            <person name="Lin W."/>
            <person name="Li S."/>
            <person name="Li H."/>
            <person name="Zhou J."/>
            <person name="Ni P."/>
            <person name="Dong W."/>
            <person name="Hu S."/>
            <person name="Zeng C."/>
            <person name="Zhang J."/>
            <person name="Zhang Y."/>
            <person name="Li R."/>
            <person name="Xu Z."/>
            <person name="Li S."/>
            <person name="Li X."/>
            <person name="Zheng H."/>
            <person name="Cong L."/>
            <person name="Lin L."/>
            <person name="Yin J."/>
            <person name="Geng J."/>
            <person name="Li G."/>
            <person name="Shi J."/>
            <person name="Liu J."/>
            <person name="Lv H."/>
            <person name="Li J."/>
            <person name="Wang J."/>
            <person name="Deng Y."/>
            <person name="Ran L."/>
            <person name="Shi X."/>
            <person name="Wang X."/>
            <person name="Wu Q."/>
            <person name="Li C."/>
            <person name="Ren X."/>
            <person name="Wang J."/>
            <person name="Wang X."/>
            <person name="Li D."/>
            <person name="Liu D."/>
            <person name="Zhang X."/>
            <person name="Ji Z."/>
            <person name="Zhao W."/>
            <person name="Sun Y."/>
            <person name="Zhang Z."/>
            <person name="Bao J."/>
            <person name="Han Y."/>
            <person name="Dong L."/>
            <person name="Ji J."/>
            <person name="Chen P."/>
            <person name="Wu S."/>
            <person name="Liu J."/>
            <person name="Xiao Y."/>
            <person name="Bu D."/>
            <person name="Tan J."/>
            <person name="Yang L."/>
            <person name="Ye C."/>
            <person name="Zhang J."/>
            <person name="Xu J."/>
            <person name="Zhou Y."/>
            <person name="Yu Y."/>
            <person name="Zhang B."/>
            <person name="Zhuang S."/>
            <person name="Wei H."/>
            <person name="Liu B."/>
            <person name="Lei M."/>
            <person name="Yu H."/>
            <person name="Li Y."/>
            <person name="Xu H."/>
            <person name="Wei S."/>
            <person name="He X."/>
            <person name="Fang L."/>
            <person name="Zhang Z."/>
            <person name="Zhang Y."/>
            <person name="Huang X."/>
            <person name="Su Z."/>
            <person name="Tong W."/>
            <person name="Li J."/>
            <person name="Tong Z."/>
            <person name="Li S."/>
            <person name="Ye J."/>
            <person name="Wang L."/>
            <person name="Fang L."/>
            <person name="Lei T."/>
            <person name="Chen C.-S."/>
            <person name="Chen H.-C."/>
            <person name="Xu Z."/>
            <person name="Li H."/>
            <person name="Huang H."/>
            <person name="Zhang F."/>
            <person name="Xu H."/>
            <person name="Li N."/>
            <person name="Zhao C."/>
            <person name="Li S."/>
            <person name="Dong L."/>
            <person name="Huang Y."/>
            <person name="Li L."/>
            <person name="Xi Y."/>
            <person name="Qi Q."/>
            <person name="Li W."/>
            <person name="Zhang B."/>
            <person name="Hu W."/>
            <person name="Zhang Y."/>
            <person name="Tian X."/>
            <person name="Jiao Y."/>
            <person name="Liang X."/>
            <person name="Jin J."/>
            <person name="Gao L."/>
            <person name="Zheng W."/>
            <person name="Hao B."/>
            <person name="Liu S.-M."/>
            <person name="Wang W."/>
            <person name="Yuan L."/>
            <person name="Cao M."/>
            <person name="McDermott J."/>
            <person name="Samudrala R."/>
            <person name="Wang J."/>
            <person name="Wong G.K.-S."/>
            <person name="Yang H."/>
        </authorList>
    </citation>
    <scope>NUCLEOTIDE SEQUENCE [LARGE SCALE GENOMIC DNA]</scope>
    <source>
        <strain>cv. Nipponbare</strain>
    </source>
</reference>
<reference key="6">
    <citation type="journal article" date="2003" name="Science">
        <title>Collection, mapping, and annotation of over 28,000 cDNA clones from japonica rice.</title>
        <authorList>
            <consortium name="The rice full-length cDNA consortium"/>
        </authorList>
    </citation>
    <scope>NUCLEOTIDE SEQUENCE [LARGE SCALE MRNA]</scope>
    <source>
        <strain>cv. Nipponbare</strain>
    </source>
</reference>
<feature type="signal peptide" evidence="1">
    <location>
        <begin position="1"/>
        <end position="20"/>
    </location>
</feature>
<feature type="chain" id="PRO_0000294160" description="Beta-galactosidase 8">
    <location>
        <begin position="21"/>
        <end position="673"/>
    </location>
</feature>
<feature type="active site" description="Proton donor" evidence="1">
    <location>
        <position position="189"/>
    </location>
</feature>
<feature type="active site" description="Nucleophile" evidence="1">
    <location>
        <position position="272"/>
    </location>
</feature>
<feature type="glycosylation site" description="N-linked (GlcNAc...) asparagine" evidence="1">
    <location>
        <position position="38"/>
    </location>
</feature>
<feature type="glycosylation site" description="N-linked (GlcNAc...) asparagine" evidence="1">
    <location>
        <position position="230"/>
    </location>
</feature>
<feature type="glycosylation site" description="N-linked (GlcNAc...) asparagine" evidence="1">
    <location>
        <position position="304"/>
    </location>
</feature>
<feature type="glycosylation site" description="N-linked (GlcNAc...) asparagine" evidence="1">
    <location>
        <position position="329"/>
    </location>
</feature>
<feature type="glycosylation site" description="N-linked (GlcNAc...) asparagine" evidence="1">
    <location>
        <position position="401"/>
    </location>
</feature>
<feature type="glycosylation site" description="N-linked (GlcNAc...) asparagine" evidence="1">
    <location>
        <position position="489"/>
    </location>
</feature>
<feature type="glycosylation site" description="N-linked (GlcNAc...) asparagine" evidence="1">
    <location>
        <position position="540"/>
    </location>
</feature>
<sequence length="673" mass="75674">MGPSRSFQNLLLLLLPLALALCSAAASGEASRRFWVENDTFWKDGAPFQIVGGDVHYFRIVPEYWKDRLLRAKALGLNTIQTYVPWNLHEPKPLSWEFKGFTDIESYLRLAHELDMLVMLRVGPYICGEWDLGGFPPWLLTIEPTIELRSSDSTYLSLVDRWWGVLLPKIAPLLYSNGGPIIMVQIENEFGSFGDDKNYLHYLVEVARRYLGNDIMLYTTDGGAIGNLKNGTILQDDVFAAVDFDTGSNPWPIFQLQKEYNLPGKSAPLSSEFYTGWLTHWGERIATTDASSTAKALKRILCRNGSAVLYMAHGGTNFGFYNGANTGQNESDYKADLTSYDYDAPIREYGDVHNAKYKALRRVIHECTGIPLLQLPSKIERASYGLVEVQKVASLFDVIHNISDALKVAFSEQPLSMELMGQMFGFLLYTSEYQEKHSSSILSIPKVHDRAQVFVSCSHGDVRKPRYVGIVERWSSKTLQIPSLSCSSNVSLYILVENMGRVNYGPYIFDQKGILSSVEIDGIILRHWKMHPVSLNAVGNLSKLQLIMQMTDAEASKVSIYGDSENKLQDVSLYLNEGISEEPAFYEGHFHIDSESEKKDTFISFRGWNKGVAFVNNFNIGRFWPAIGPQCALYVPAPILKPGDNVIVIFELHSPNPELTIKLVKDPDFTCGQ</sequence>
<protein>
    <recommendedName>
        <fullName>Beta-galactosidase 8</fullName>
        <shortName>Lactase 8</shortName>
        <ecNumber>3.2.1.23</ecNumber>
    </recommendedName>
</protein>
<evidence type="ECO:0000255" key="1"/>
<evidence type="ECO:0000305" key="2"/>
<evidence type="ECO:0000312" key="3">
    <source>
        <dbReference type="EMBL" id="EEE64524.1"/>
    </source>
</evidence>
<gene>
    <name type="ordered locus">Os05g0539400</name>
    <name type="ordered locus">LOC_Os05g46200</name>
    <name evidence="3" type="ORF">OsJ_19375</name>
    <name type="ORF">OSJNBa0052K01.15</name>
</gene>
<dbReference type="EC" id="3.2.1.23"/>
<dbReference type="EMBL" id="AC119291">
    <property type="protein sequence ID" value="AAV59405.1"/>
    <property type="status" value="ALT_SEQ"/>
    <property type="molecule type" value="Genomic_DNA"/>
</dbReference>
<dbReference type="EMBL" id="AP008211">
    <property type="protein sequence ID" value="BAF18086.1"/>
    <property type="molecule type" value="Genomic_DNA"/>
</dbReference>
<dbReference type="EMBL" id="AP014961">
    <property type="protein sequence ID" value="BAS95102.1"/>
    <property type="molecule type" value="Genomic_DNA"/>
</dbReference>
<dbReference type="EMBL" id="CM000142">
    <property type="protein sequence ID" value="EEE64524.1"/>
    <property type="molecule type" value="Genomic_DNA"/>
</dbReference>
<dbReference type="EMBL" id="AK068572">
    <property type="protein sequence ID" value="BAG90972.1"/>
    <property type="molecule type" value="mRNA"/>
</dbReference>
<dbReference type="RefSeq" id="XP_015639206.1">
    <property type="nucleotide sequence ID" value="XM_015783720.1"/>
</dbReference>
<dbReference type="SMR" id="Q0DGD7"/>
<dbReference type="FunCoup" id="Q0DGD7">
    <property type="interactions" value="774"/>
</dbReference>
<dbReference type="STRING" id="39947.Q0DGD7"/>
<dbReference type="CAZy" id="GH35">
    <property type="family name" value="Glycoside Hydrolase Family 35"/>
</dbReference>
<dbReference type="PaxDb" id="39947-Q0DGD7"/>
<dbReference type="EnsemblPlants" id="Os05t0539400-01">
    <property type="protein sequence ID" value="Os05t0539400-01"/>
    <property type="gene ID" value="Os05g0539400"/>
</dbReference>
<dbReference type="Gramene" id="Os05t0539400-01">
    <property type="protein sequence ID" value="Os05t0539400-01"/>
    <property type="gene ID" value="Os05g0539400"/>
</dbReference>
<dbReference type="KEGG" id="dosa:Os05g0539400"/>
<dbReference type="eggNOG" id="KOG0496">
    <property type="taxonomic scope" value="Eukaryota"/>
</dbReference>
<dbReference type="HOGENOM" id="CLU_007853_7_2_1"/>
<dbReference type="InParanoid" id="Q0DGD7"/>
<dbReference type="OMA" id="FWNIHEQ"/>
<dbReference type="OrthoDB" id="1657402at2759"/>
<dbReference type="Proteomes" id="UP000000763">
    <property type="component" value="Chromosome 5"/>
</dbReference>
<dbReference type="Proteomes" id="UP000007752">
    <property type="component" value="Chromosome 5"/>
</dbReference>
<dbReference type="Proteomes" id="UP000059680">
    <property type="component" value="Chromosome 5"/>
</dbReference>
<dbReference type="GO" id="GO:0048046">
    <property type="term" value="C:apoplast"/>
    <property type="evidence" value="ECO:0007669"/>
    <property type="project" value="UniProtKB-SubCell"/>
</dbReference>
<dbReference type="GO" id="GO:0005773">
    <property type="term" value="C:vacuole"/>
    <property type="evidence" value="ECO:0000318"/>
    <property type="project" value="GO_Central"/>
</dbReference>
<dbReference type="GO" id="GO:0004565">
    <property type="term" value="F:beta-galactosidase activity"/>
    <property type="evidence" value="ECO:0000318"/>
    <property type="project" value="GO_Central"/>
</dbReference>
<dbReference type="GO" id="GO:0019388">
    <property type="term" value="P:galactose catabolic process"/>
    <property type="evidence" value="ECO:0000318"/>
    <property type="project" value="GO_Central"/>
</dbReference>
<dbReference type="FunFam" id="2.60.120.260:FF:000021">
    <property type="entry name" value="Beta-galactosidase"/>
    <property type="match status" value="1"/>
</dbReference>
<dbReference type="FunFam" id="3.20.20.80:FF:000115">
    <property type="entry name" value="Beta-galactosidase"/>
    <property type="match status" value="1"/>
</dbReference>
<dbReference type="Gene3D" id="2.60.120.260">
    <property type="entry name" value="Galactose-binding domain-like"/>
    <property type="match status" value="2"/>
</dbReference>
<dbReference type="Gene3D" id="3.20.20.80">
    <property type="entry name" value="Glycosidases"/>
    <property type="match status" value="1"/>
</dbReference>
<dbReference type="InterPro" id="IPR026283">
    <property type="entry name" value="B-gal_1-like"/>
</dbReference>
<dbReference type="InterPro" id="IPR048912">
    <property type="entry name" value="BetaGal1-like_ABD1"/>
</dbReference>
<dbReference type="InterPro" id="IPR048913">
    <property type="entry name" value="BetaGal_gal-bd"/>
</dbReference>
<dbReference type="InterPro" id="IPR008979">
    <property type="entry name" value="Galactose-bd-like_sf"/>
</dbReference>
<dbReference type="InterPro" id="IPR031330">
    <property type="entry name" value="Gly_Hdrlase_35_cat"/>
</dbReference>
<dbReference type="InterPro" id="IPR019801">
    <property type="entry name" value="Glyco_hydro_35_CS"/>
</dbReference>
<dbReference type="InterPro" id="IPR001944">
    <property type="entry name" value="Glycoside_Hdrlase_35"/>
</dbReference>
<dbReference type="InterPro" id="IPR017853">
    <property type="entry name" value="Glycoside_hydrolase_SF"/>
</dbReference>
<dbReference type="PANTHER" id="PTHR23421">
    <property type="entry name" value="BETA-GALACTOSIDASE RELATED"/>
    <property type="match status" value="1"/>
</dbReference>
<dbReference type="Pfam" id="PF21317">
    <property type="entry name" value="BetaGal_ABD_1"/>
    <property type="match status" value="1"/>
</dbReference>
<dbReference type="Pfam" id="PF21467">
    <property type="entry name" value="BetaGal_gal-bd"/>
    <property type="match status" value="1"/>
</dbReference>
<dbReference type="Pfam" id="PF01301">
    <property type="entry name" value="Glyco_hydro_35"/>
    <property type="match status" value="1"/>
</dbReference>
<dbReference type="PIRSF" id="PIRSF006336">
    <property type="entry name" value="B-gal"/>
    <property type="match status" value="1"/>
</dbReference>
<dbReference type="PRINTS" id="PR00742">
    <property type="entry name" value="GLHYDRLASE35"/>
</dbReference>
<dbReference type="SUPFAM" id="SSF51445">
    <property type="entry name" value="(Trans)glycosidases"/>
    <property type="match status" value="1"/>
</dbReference>
<dbReference type="SUPFAM" id="SSF49785">
    <property type="entry name" value="Galactose-binding domain-like"/>
    <property type="match status" value="1"/>
</dbReference>
<dbReference type="PROSITE" id="PS01182">
    <property type="entry name" value="GLYCOSYL_HYDROL_F35"/>
    <property type="match status" value="1"/>
</dbReference>